<protein>
    <recommendedName>
        <fullName evidence="1">Chaperonin GroEL 2</fullName>
        <ecNumber evidence="1">5.6.1.7</ecNumber>
    </recommendedName>
    <alternativeName>
        <fullName evidence="1">60 kDa chaperonin 2</fullName>
    </alternativeName>
    <alternativeName>
        <fullName evidence="1">Chaperonin-60 2</fullName>
        <shortName evidence="1">Cpn60 2</shortName>
    </alternativeName>
</protein>
<proteinExistence type="inferred from homology"/>
<reference key="1">
    <citation type="journal article" date="2006" name="Nat. Biotechnol.">
        <title>Complete genome of the mutualistic, N2-fixing grass endophyte Azoarcus sp. strain BH72.</title>
        <authorList>
            <person name="Krause A."/>
            <person name="Ramakumar A."/>
            <person name="Bartels D."/>
            <person name="Battistoni F."/>
            <person name="Bekel T."/>
            <person name="Boch J."/>
            <person name="Boehm M."/>
            <person name="Friedrich F."/>
            <person name="Hurek T."/>
            <person name="Krause L."/>
            <person name="Linke B."/>
            <person name="McHardy A.C."/>
            <person name="Sarkar A."/>
            <person name="Schneiker S."/>
            <person name="Syed A.A."/>
            <person name="Thauer R."/>
            <person name="Vorhoelter F.-J."/>
            <person name="Weidner S."/>
            <person name="Puehler A."/>
            <person name="Reinhold-Hurek B."/>
            <person name="Kaiser O."/>
            <person name="Goesmann A."/>
        </authorList>
    </citation>
    <scope>NUCLEOTIDE SEQUENCE [LARGE SCALE GENOMIC DNA]</scope>
    <source>
        <strain>BH72</strain>
    </source>
</reference>
<dbReference type="EC" id="5.6.1.7" evidence="1"/>
<dbReference type="EMBL" id="AM406670">
    <property type="protein sequence ID" value="CAL94983.1"/>
    <property type="molecule type" value="Genomic_DNA"/>
</dbReference>
<dbReference type="RefSeq" id="WP_011766097.1">
    <property type="nucleotide sequence ID" value="NC_008702.1"/>
</dbReference>
<dbReference type="SMR" id="A1K828"/>
<dbReference type="STRING" id="62928.azo2366"/>
<dbReference type="KEGG" id="azo:azo2366"/>
<dbReference type="eggNOG" id="COG0459">
    <property type="taxonomic scope" value="Bacteria"/>
</dbReference>
<dbReference type="HOGENOM" id="CLU_016503_3_0_4"/>
<dbReference type="Proteomes" id="UP000002588">
    <property type="component" value="Chromosome"/>
</dbReference>
<dbReference type="GO" id="GO:0005737">
    <property type="term" value="C:cytoplasm"/>
    <property type="evidence" value="ECO:0007669"/>
    <property type="project" value="UniProtKB-SubCell"/>
</dbReference>
<dbReference type="GO" id="GO:0005524">
    <property type="term" value="F:ATP binding"/>
    <property type="evidence" value="ECO:0007669"/>
    <property type="project" value="UniProtKB-UniRule"/>
</dbReference>
<dbReference type="GO" id="GO:0140662">
    <property type="term" value="F:ATP-dependent protein folding chaperone"/>
    <property type="evidence" value="ECO:0007669"/>
    <property type="project" value="InterPro"/>
</dbReference>
<dbReference type="GO" id="GO:0016853">
    <property type="term" value="F:isomerase activity"/>
    <property type="evidence" value="ECO:0007669"/>
    <property type="project" value="UniProtKB-KW"/>
</dbReference>
<dbReference type="GO" id="GO:0051082">
    <property type="term" value="F:unfolded protein binding"/>
    <property type="evidence" value="ECO:0007669"/>
    <property type="project" value="UniProtKB-UniRule"/>
</dbReference>
<dbReference type="GO" id="GO:0042026">
    <property type="term" value="P:protein refolding"/>
    <property type="evidence" value="ECO:0007669"/>
    <property type="project" value="UniProtKB-UniRule"/>
</dbReference>
<dbReference type="CDD" id="cd03344">
    <property type="entry name" value="GroEL"/>
    <property type="match status" value="1"/>
</dbReference>
<dbReference type="FunFam" id="1.10.560.10:FF:000001">
    <property type="entry name" value="60 kDa chaperonin"/>
    <property type="match status" value="1"/>
</dbReference>
<dbReference type="FunFam" id="3.50.7.10:FF:000001">
    <property type="entry name" value="60 kDa chaperonin"/>
    <property type="match status" value="1"/>
</dbReference>
<dbReference type="Gene3D" id="3.50.7.10">
    <property type="entry name" value="GroEL"/>
    <property type="match status" value="1"/>
</dbReference>
<dbReference type="Gene3D" id="1.10.560.10">
    <property type="entry name" value="GroEL-like equatorial domain"/>
    <property type="match status" value="1"/>
</dbReference>
<dbReference type="Gene3D" id="3.30.260.10">
    <property type="entry name" value="TCP-1-like chaperonin intermediate domain"/>
    <property type="match status" value="1"/>
</dbReference>
<dbReference type="HAMAP" id="MF_00600">
    <property type="entry name" value="CH60"/>
    <property type="match status" value="1"/>
</dbReference>
<dbReference type="InterPro" id="IPR018370">
    <property type="entry name" value="Chaperonin_Cpn60_CS"/>
</dbReference>
<dbReference type="InterPro" id="IPR001844">
    <property type="entry name" value="Cpn60/GroEL"/>
</dbReference>
<dbReference type="InterPro" id="IPR002423">
    <property type="entry name" value="Cpn60/GroEL/TCP-1"/>
</dbReference>
<dbReference type="InterPro" id="IPR027409">
    <property type="entry name" value="GroEL-like_apical_dom_sf"/>
</dbReference>
<dbReference type="InterPro" id="IPR027413">
    <property type="entry name" value="GROEL-like_equatorial_sf"/>
</dbReference>
<dbReference type="InterPro" id="IPR027410">
    <property type="entry name" value="TCP-1-like_intermed_sf"/>
</dbReference>
<dbReference type="NCBIfam" id="TIGR02348">
    <property type="entry name" value="GroEL"/>
    <property type="match status" value="1"/>
</dbReference>
<dbReference type="NCBIfam" id="NF000592">
    <property type="entry name" value="PRK00013.1"/>
    <property type="match status" value="1"/>
</dbReference>
<dbReference type="NCBIfam" id="NF009487">
    <property type="entry name" value="PRK12849.1"/>
    <property type="match status" value="1"/>
</dbReference>
<dbReference type="NCBIfam" id="NF009488">
    <property type="entry name" value="PRK12850.1"/>
    <property type="match status" value="1"/>
</dbReference>
<dbReference type="NCBIfam" id="NF009489">
    <property type="entry name" value="PRK12851.1"/>
    <property type="match status" value="1"/>
</dbReference>
<dbReference type="PANTHER" id="PTHR45633">
    <property type="entry name" value="60 KDA HEAT SHOCK PROTEIN, MITOCHONDRIAL"/>
    <property type="match status" value="1"/>
</dbReference>
<dbReference type="Pfam" id="PF00118">
    <property type="entry name" value="Cpn60_TCP1"/>
    <property type="match status" value="1"/>
</dbReference>
<dbReference type="PRINTS" id="PR00298">
    <property type="entry name" value="CHAPERONIN60"/>
</dbReference>
<dbReference type="SUPFAM" id="SSF52029">
    <property type="entry name" value="GroEL apical domain-like"/>
    <property type="match status" value="1"/>
</dbReference>
<dbReference type="SUPFAM" id="SSF48592">
    <property type="entry name" value="GroEL equatorial domain-like"/>
    <property type="match status" value="1"/>
</dbReference>
<dbReference type="SUPFAM" id="SSF54849">
    <property type="entry name" value="GroEL-intermediate domain like"/>
    <property type="match status" value="1"/>
</dbReference>
<dbReference type="PROSITE" id="PS00296">
    <property type="entry name" value="CHAPERONINS_CPN60"/>
    <property type="match status" value="1"/>
</dbReference>
<feature type="chain" id="PRO_0000331971" description="Chaperonin GroEL 2">
    <location>
        <begin position="1"/>
        <end position="547"/>
    </location>
</feature>
<feature type="region of interest" description="Disordered" evidence="2">
    <location>
        <begin position="528"/>
        <end position="547"/>
    </location>
</feature>
<feature type="compositionally biased region" description="Gly residues" evidence="2">
    <location>
        <begin position="535"/>
        <end position="547"/>
    </location>
</feature>
<feature type="binding site" evidence="1">
    <location>
        <begin position="30"/>
        <end position="33"/>
    </location>
    <ligand>
        <name>ATP</name>
        <dbReference type="ChEBI" id="CHEBI:30616"/>
    </ligand>
</feature>
<feature type="binding site" evidence="1">
    <location>
        <position position="51"/>
    </location>
    <ligand>
        <name>ATP</name>
        <dbReference type="ChEBI" id="CHEBI:30616"/>
    </ligand>
</feature>
<feature type="binding site" evidence="1">
    <location>
        <begin position="87"/>
        <end position="91"/>
    </location>
    <ligand>
        <name>ATP</name>
        <dbReference type="ChEBI" id="CHEBI:30616"/>
    </ligand>
</feature>
<feature type="binding site" evidence="1">
    <location>
        <position position="415"/>
    </location>
    <ligand>
        <name>ATP</name>
        <dbReference type="ChEBI" id="CHEBI:30616"/>
    </ligand>
</feature>
<feature type="binding site" evidence="1">
    <location>
        <begin position="479"/>
        <end position="481"/>
    </location>
    <ligand>
        <name>ATP</name>
        <dbReference type="ChEBI" id="CHEBI:30616"/>
    </ligand>
</feature>
<feature type="binding site" evidence="1">
    <location>
        <position position="495"/>
    </location>
    <ligand>
        <name>ATP</name>
        <dbReference type="ChEBI" id="CHEBI:30616"/>
    </ligand>
</feature>
<comment type="function">
    <text evidence="1">Together with its co-chaperonin GroES, plays an essential role in assisting protein folding. The GroEL-GroES system forms a nano-cage that allows encapsulation of the non-native substrate proteins and provides a physical environment optimized to promote and accelerate protein folding.</text>
</comment>
<comment type="catalytic activity">
    <reaction evidence="1">
        <text>ATP + H2O + a folded polypeptide = ADP + phosphate + an unfolded polypeptide.</text>
        <dbReference type="EC" id="5.6.1.7"/>
    </reaction>
</comment>
<comment type="subunit">
    <text evidence="1">Forms a cylinder of 14 subunits composed of two heptameric rings stacked back-to-back. Interacts with the co-chaperonin GroES.</text>
</comment>
<comment type="subcellular location">
    <subcellularLocation>
        <location evidence="1">Cytoplasm</location>
    </subcellularLocation>
</comment>
<comment type="similarity">
    <text evidence="1">Belongs to the chaperonin (HSP60) family.</text>
</comment>
<gene>
    <name evidence="1" type="primary">groEL2</name>
    <name evidence="1" type="synonym">groL2</name>
    <name type="ordered locus">azo2366</name>
</gene>
<keyword id="KW-0067">ATP-binding</keyword>
<keyword id="KW-0143">Chaperone</keyword>
<keyword id="KW-0963">Cytoplasm</keyword>
<keyword id="KW-0413">Isomerase</keyword>
<keyword id="KW-0547">Nucleotide-binding</keyword>
<keyword id="KW-1185">Reference proteome</keyword>
<organism>
    <name type="scientific">Azoarcus sp. (strain BH72)</name>
    <dbReference type="NCBI Taxonomy" id="418699"/>
    <lineage>
        <taxon>Bacteria</taxon>
        <taxon>Pseudomonadati</taxon>
        <taxon>Pseudomonadota</taxon>
        <taxon>Betaproteobacteria</taxon>
        <taxon>Rhodocyclales</taxon>
        <taxon>Zoogloeaceae</taxon>
        <taxon>Azoarcus</taxon>
    </lineage>
</organism>
<accession>A1K828</accession>
<evidence type="ECO:0000255" key="1">
    <source>
        <dbReference type="HAMAP-Rule" id="MF_00600"/>
    </source>
</evidence>
<evidence type="ECO:0000256" key="2">
    <source>
        <dbReference type="SAM" id="MobiDB-lite"/>
    </source>
</evidence>
<sequence>MAAKQVLFGDDARAKVVQGVNILANAVKVTLGPKGRNVVLERSFGAPTVTKDGVSVAKEIELKDKFENIGAQLVKEVASKTADNAGDGTTTATVLAQAIVREGFKFVAAGFNPADLKRGIDKAVAAIVDELKALSKPTTTSKEIAQVGAISANSDADIGDIIAKAIDKVGKEGVITVEDGKSLNNELDVVEGLQFDRGYLSPYFINNPDKQVAELDNPFILLFDKKISNIRELLPVLEQVAKAGSPLLVVAEDVDGEALATLVVNTIRGILKVVAVKAPGFGDRRKAILEDIAILTGGQVIAEEVGLSLEKATLADLGQAKRVEVQKENTTLIDGAGSVEAIKARVSSIDALIAAATSDYDREKLQERKAKLAGGVAVIKVGAATEVELKEKKARVEDALHATRAAVEEGIVPGGGVALLRARAAIKDLKGDNHEQDAGIKIVLRAVEEPLRQIVANAGDEASVVVARVLEGSGNFGYNAANGQYGDLVEQGVLDPAKVTRSALQNAASVAALILTTDALVAEQADDKPATAGLPHGGPGGFGGPEF</sequence>
<name>CH602_AZOSB</name>